<name>Y1449_CAMJE</name>
<evidence type="ECO:0000255" key="1">
    <source>
        <dbReference type="HAMAP-Rule" id="MF_00764"/>
    </source>
</evidence>
<gene>
    <name type="ordered locus">Cj1449c</name>
</gene>
<keyword id="KW-1185">Reference proteome</keyword>
<comment type="similarity">
    <text evidence="1">Belongs to the UPF0306 family.</text>
</comment>
<sequence>MDERILEFIKNEQLLSWAMIDEKGVYTASAFYAFDEKNLAFIIASHEDTKHIRLASENSSIALNIAKESKIAFLKGVQAKAEFKMASKEQMKIYFSKFPFAKFDKSAKIYALELFWLKFTNNALGLSKKLEFYKK</sequence>
<feature type="chain" id="PRO_0000214864" description="UPF0306 protein Cj1449c">
    <location>
        <begin position="1"/>
        <end position="135"/>
    </location>
</feature>
<organism>
    <name type="scientific">Campylobacter jejuni subsp. jejuni serotype O:2 (strain ATCC 700819 / NCTC 11168)</name>
    <dbReference type="NCBI Taxonomy" id="192222"/>
    <lineage>
        <taxon>Bacteria</taxon>
        <taxon>Pseudomonadati</taxon>
        <taxon>Campylobacterota</taxon>
        <taxon>Epsilonproteobacteria</taxon>
        <taxon>Campylobacterales</taxon>
        <taxon>Campylobacteraceae</taxon>
        <taxon>Campylobacter</taxon>
    </lineage>
</organism>
<protein>
    <recommendedName>
        <fullName evidence="1">UPF0306 protein Cj1449c</fullName>
    </recommendedName>
</protein>
<proteinExistence type="inferred from homology"/>
<dbReference type="EMBL" id="AL111168">
    <property type="protein sequence ID" value="CAL35557.1"/>
    <property type="molecule type" value="Genomic_DNA"/>
</dbReference>
<dbReference type="PIR" id="H81290">
    <property type="entry name" value="H81290"/>
</dbReference>
<dbReference type="RefSeq" id="WP_002851336.1">
    <property type="nucleotide sequence ID" value="NZ_SZUC01000003.1"/>
</dbReference>
<dbReference type="RefSeq" id="YP_002344831.1">
    <property type="nucleotide sequence ID" value="NC_002163.1"/>
</dbReference>
<dbReference type="SMR" id="Q9PML1"/>
<dbReference type="IntAct" id="Q9PML1">
    <property type="interactions" value="73"/>
</dbReference>
<dbReference type="STRING" id="192222.Cj1449c"/>
<dbReference type="PaxDb" id="192222-Cj1449c"/>
<dbReference type="EnsemblBacteria" id="CAL35557">
    <property type="protein sequence ID" value="CAL35557"/>
    <property type="gene ID" value="Cj1449c"/>
</dbReference>
<dbReference type="GeneID" id="905737"/>
<dbReference type="KEGG" id="cje:Cj1449c"/>
<dbReference type="PATRIC" id="fig|192222.6.peg.1429"/>
<dbReference type="eggNOG" id="COG3787">
    <property type="taxonomic scope" value="Bacteria"/>
</dbReference>
<dbReference type="HOGENOM" id="CLU_105087_3_0_7"/>
<dbReference type="OrthoDB" id="663512at2"/>
<dbReference type="Proteomes" id="UP000000799">
    <property type="component" value="Chromosome"/>
</dbReference>
<dbReference type="Gene3D" id="2.30.110.10">
    <property type="entry name" value="Electron Transport, Fmn-binding Protein, Chain A"/>
    <property type="match status" value="1"/>
</dbReference>
<dbReference type="HAMAP" id="MF_00764">
    <property type="entry name" value="UPF0306"/>
    <property type="match status" value="1"/>
</dbReference>
<dbReference type="InterPro" id="IPR012349">
    <property type="entry name" value="Split_barrel_FMN-bd"/>
</dbReference>
<dbReference type="InterPro" id="IPR011194">
    <property type="entry name" value="UPF0306"/>
</dbReference>
<dbReference type="PIRSF" id="PIRSF009554">
    <property type="entry name" value="UCP009554"/>
    <property type="match status" value="1"/>
</dbReference>
<accession>Q9PML1</accession>
<accession>Q0P8G6</accession>
<reference key="1">
    <citation type="journal article" date="2000" name="Nature">
        <title>The genome sequence of the food-borne pathogen Campylobacter jejuni reveals hypervariable sequences.</title>
        <authorList>
            <person name="Parkhill J."/>
            <person name="Wren B.W."/>
            <person name="Mungall K.L."/>
            <person name="Ketley J.M."/>
            <person name="Churcher C.M."/>
            <person name="Basham D."/>
            <person name="Chillingworth T."/>
            <person name="Davies R.M."/>
            <person name="Feltwell T."/>
            <person name="Holroyd S."/>
            <person name="Jagels K."/>
            <person name="Karlyshev A.V."/>
            <person name="Moule S."/>
            <person name="Pallen M.J."/>
            <person name="Penn C.W."/>
            <person name="Quail M.A."/>
            <person name="Rajandream M.A."/>
            <person name="Rutherford K.M."/>
            <person name="van Vliet A.H.M."/>
            <person name="Whitehead S."/>
            <person name="Barrell B.G."/>
        </authorList>
    </citation>
    <scope>NUCLEOTIDE SEQUENCE [LARGE SCALE GENOMIC DNA]</scope>
    <source>
        <strain>ATCC 700819 / NCTC 11168</strain>
    </source>
</reference>